<dbReference type="EC" id="2.4.1.227" evidence="1"/>
<dbReference type="EMBL" id="AE016879">
    <property type="protein sequence ID" value="AAP27775.1"/>
    <property type="molecule type" value="Genomic_DNA"/>
</dbReference>
<dbReference type="EMBL" id="AE017334">
    <property type="protein sequence ID" value="AAT33166.2"/>
    <property type="molecule type" value="Genomic_DNA"/>
</dbReference>
<dbReference type="EMBL" id="AE017225">
    <property type="protein sequence ID" value="AAT56063.1"/>
    <property type="status" value="ALT_INIT"/>
    <property type="molecule type" value="Genomic_DNA"/>
</dbReference>
<dbReference type="RefSeq" id="NP_846289.1">
    <property type="nucleotide sequence ID" value="NC_003997.3"/>
</dbReference>
<dbReference type="SMR" id="Q81JG5"/>
<dbReference type="STRING" id="261594.GBAA_4049"/>
<dbReference type="CAZy" id="GT28">
    <property type="family name" value="Glycosyltransferase Family 28"/>
</dbReference>
<dbReference type="DNASU" id="1087469"/>
<dbReference type="KEGG" id="ban:BA_4049"/>
<dbReference type="KEGG" id="bar:GBAA_4049"/>
<dbReference type="KEGG" id="bat:BAS3761"/>
<dbReference type="PATRIC" id="fig|198094.11.peg.4020"/>
<dbReference type="eggNOG" id="COG0707">
    <property type="taxonomic scope" value="Bacteria"/>
</dbReference>
<dbReference type="HOGENOM" id="CLU_037404_0_1_9"/>
<dbReference type="OrthoDB" id="9808936at2"/>
<dbReference type="UniPathway" id="UPA00219"/>
<dbReference type="Proteomes" id="UP000000427">
    <property type="component" value="Chromosome"/>
</dbReference>
<dbReference type="Proteomes" id="UP000000594">
    <property type="component" value="Chromosome"/>
</dbReference>
<dbReference type="GO" id="GO:0005886">
    <property type="term" value="C:plasma membrane"/>
    <property type="evidence" value="ECO:0007669"/>
    <property type="project" value="UniProtKB-SubCell"/>
</dbReference>
<dbReference type="GO" id="GO:0051991">
    <property type="term" value="F:UDP-N-acetyl-D-glucosamine:N-acetylmuramoyl-L-alanyl-D-glutamyl-meso-2,6-diaminopimelyl-D-alanyl-D-alanine-diphosphoundecaprenol 4-beta-N-acetylglucosaminlytransferase activity"/>
    <property type="evidence" value="ECO:0007669"/>
    <property type="project" value="RHEA"/>
</dbReference>
<dbReference type="GO" id="GO:0050511">
    <property type="term" value="F:undecaprenyldiphospho-muramoylpentapeptide beta-N-acetylglucosaminyltransferase activity"/>
    <property type="evidence" value="ECO:0007669"/>
    <property type="project" value="UniProtKB-UniRule"/>
</dbReference>
<dbReference type="GO" id="GO:0005975">
    <property type="term" value="P:carbohydrate metabolic process"/>
    <property type="evidence" value="ECO:0007669"/>
    <property type="project" value="InterPro"/>
</dbReference>
<dbReference type="GO" id="GO:0051301">
    <property type="term" value="P:cell division"/>
    <property type="evidence" value="ECO:0007669"/>
    <property type="project" value="UniProtKB-KW"/>
</dbReference>
<dbReference type="GO" id="GO:0071555">
    <property type="term" value="P:cell wall organization"/>
    <property type="evidence" value="ECO:0007669"/>
    <property type="project" value="UniProtKB-KW"/>
</dbReference>
<dbReference type="GO" id="GO:0030259">
    <property type="term" value="P:lipid glycosylation"/>
    <property type="evidence" value="ECO:0007669"/>
    <property type="project" value="UniProtKB-UniRule"/>
</dbReference>
<dbReference type="GO" id="GO:0009252">
    <property type="term" value="P:peptidoglycan biosynthetic process"/>
    <property type="evidence" value="ECO:0007669"/>
    <property type="project" value="UniProtKB-UniRule"/>
</dbReference>
<dbReference type="GO" id="GO:0008360">
    <property type="term" value="P:regulation of cell shape"/>
    <property type="evidence" value="ECO:0007669"/>
    <property type="project" value="UniProtKB-KW"/>
</dbReference>
<dbReference type="CDD" id="cd03785">
    <property type="entry name" value="GT28_MurG"/>
    <property type="match status" value="1"/>
</dbReference>
<dbReference type="Gene3D" id="3.40.50.2000">
    <property type="entry name" value="Glycogen Phosphorylase B"/>
    <property type="match status" value="2"/>
</dbReference>
<dbReference type="HAMAP" id="MF_00033">
    <property type="entry name" value="MurG"/>
    <property type="match status" value="1"/>
</dbReference>
<dbReference type="InterPro" id="IPR006009">
    <property type="entry name" value="GlcNAc_MurG"/>
</dbReference>
<dbReference type="InterPro" id="IPR007235">
    <property type="entry name" value="Glyco_trans_28_C"/>
</dbReference>
<dbReference type="InterPro" id="IPR004276">
    <property type="entry name" value="GlycoTrans_28_N"/>
</dbReference>
<dbReference type="NCBIfam" id="TIGR01133">
    <property type="entry name" value="murG"/>
    <property type="match status" value="1"/>
</dbReference>
<dbReference type="PANTHER" id="PTHR21015:SF22">
    <property type="entry name" value="GLYCOSYLTRANSFERASE"/>
    <property type="match status" value="1"/>
</dbReference>
<dbReference type="PANTHER" id="PTHR21015">
    <property type="entry name" value="UDP-N-ACETYLGLUCOSAMINE--N-ACETYLMURAMYL-(PENTAPEPTIDE) PYROPHOSPHORYL-UNDECAPRENOL N-ACETYLGLUCOSAMINE TRANSFERASE 1"/>
    <property type="match status" value="1"/>
</dbReference>
<dbReference type="Pfam" id="PF04101">
    <property type="entry name" value="Glyco_tran_28_C"/>
    <property type="match status" value="1"/>
</dbReference>
<dbReference type="Pfam" id="PF03033">
    <property type="entry name" value="Glyco_transf_28"/>
    <property type="match status" value="1"/>
</dbReference>
<dbReference type="SUPFAM" id="SSF53756">
    <property type="entry name" value="UDP-Glycosyltransferase/glycogen phosphorylase"/>
    <property type="match status" value="1"/>
</dbReference>
<reference key="1">
    <citation type="journal article" date="2003" name="Nature">
        <title>The genome sequence of Bacillus anthracis Ames and comparison to closely related bacteria.</title>
        <authorList>
            <person name="Read T.D."/>
            <person name="Peterson S.N."/>
            <person name="Tourasse N.J."/>
            <person name="Baillie L.W."/>
            <person name="Paulsen I.T."/>
            <person name="Nelson K.E."/>
            <person name="Tettelin H."/>
            <person name="Fouts D.E."/>
            <person name="Eisen J.A."/>
            <person name="Gill S.R."/>
            <person name="Holtzapple E.K."/>
            <person name="Okstad O.A."/>
            <person name="Helgason E."/>
            <person name="Rilstone J."/>
            <person name="Wu M."/>
            <person name="Kolonay J.F."/>
            <person name="Beanan M.J."/>
            <person name="Dodson R.J."/>
            <person name="Brinkac L.M."/>
            <person name="Gwinn M.L."/>
            <person name="DeBoy R.T."/>
            <person name="Madpu R."/>
            <person name="Daugherty S.C."/>
            <person name="Durkin A.S."/>
            <person name="Haft D.H."/>
            <person name="Nelson W.C."/>
            <person name="Peterson J.D."/>
            <person name="Pop M."/>
            <person name="Khouri H.M."/>
            <person name="Radune D."/>
            <person name="Benton J.L."/>
            <person name="Mahamoud Y."/>
            <person name="Jiang L."/>
            <person name="Hance I.R."/>
            <person name="Weidman J.F."/>
            <person name="Berry K.J."/>
            <person name="Plaut R.D."/>
            <person name="Wolf A.M."/>
            <person name="Watkins K.L."/>
            <person name="Nierman W.C."/>
            <person name="Hazen A."/>
            <person name="Cline R.T."/>
            <person name="Redmond C."/>
            <person name="Thwaite J.E."/>
            <person name="White O."/>
            <person name="Salzberg S.L."/>
            <person name="Thomason B."/>
            <person name="Friedlander A.M."/>
            <person name="Koehler T.M."/>
            <person name="Hanna P.C."/>
            <person name="Kolstoe A.-B."/>
            <person name="Fraser C.M."/>
        </authorList>
    </citation>
    <scope>NUCLEOTIDE SEQUENCE [LARGE SCALE GENOMIC DNA]</scope>
    <source>
        <strain>Ames / isolate Porton</strain>
    </source>
</reference>
<reference key="2">
    <citation type="journal article" date="2009" name="J. Bacteriol.">
        <title>The complete genome sequence of Bacillus anthracis Ames 'Ancestor'.</title>
        <authorList>
            <person name="Ravel J."/>
            <person name="Jiang L."/>
            <person name="Stanley S.T."/>
            <person name="Wilson M.R."/>
            <person name="Decker R.S."/>
            <person name="Read T.D."/>
            <person name="Worsham P."/>
            <person name="Keim P.S."/>
            <person name="Salzberg S.L."/>
            <person name="Fraser-Liggett C.M."/>
            <person name="Rasko D.A."/>
        </authorList>
    </citation>
    <scope>NUCLEOTIDE SEQUENCE [LARGE SCALE GENOMIC DNA]</scope>
    <source>
        <strain>Ames ancestor</strain>
    </source>
</reference>
<reference key="3">
    <citation type="submission" date="2004-01" db="EMBL/GenBank/DDBJ databases">
        <title>Complete genome sequence of Bacillus anthracis Sterne.</title>
        <authorList>
            <person name="Brettin T.S."/>
            <person name="Bruce D."/>
            <person name="Challacombe J.F."/>
            <person name="Gilna P."/>
            <person name="Han C."/>
            <person name="Hill K."/>
            <person name="Hitchcock P."/>
            <person name="Jackson P."/>
            <person name="Keim P."/>
            <person name="Longmire J."/>
            <person name="Lucas S."/>
            <person name="Okinaka R."/>
            <person name="Richardson P."/>
            <person name="Rubin E."/>
            <person name="Tice H."/>
        </authorList>
    </citation>
    <scope>NUCLEOTIDE SEQUENCE [LARGE SCALE GENOMIC DNA]</scope>
    <source>
        <strain>Sterne</strain>
    </source>
</reference>
<comment type="function">
    <text evidence="1">Cell wall formation. Catalyzes the transfer of a GlcNAc subunit on undecaprenyl-pyrophosphoryl-MurNAc-pentapeptide (lipid intermediate I) to form undecaprenyl-pyrophosphoryl-MurNAc-(pentapeptide)GlcNAc (lipid intermediate II).</text>
</comment>
<comment type="catalytic activity">
    <reaction evidence="1">
        <text>di-trans,octa-cis-undecaprenyl diphospho-N-acetyl-alpha-D-muramoyl-L-alanyl-D-glutamyl-meso-2,6-diaminopimeloyl-D-alanyl-D-alanine + UDP-N-acetyl-alpha-D-glucosamine = di-trans,octa-cis-undecaprenyl diphospho-[N-acetyl-alpha-D-glucosaminyl-(1-&gt;4)]-N-acetyl-alpha-D-muramoyl-L-alanyl-D-glutamyl-meso-2,6-diaminopimeloyl-D-alanyl-D-alanine + UDP + H(+)</text>
        <dbReference type="Rhea" id="RHEA:31227"/>
        <dbReference type="ChEBI" id="CHEBI:15378"/>
        <dbReference type="ChEBI" id="CHEBI:57705"/>
        <dbReference type="ChEBI" id="CHEBI:58223"/>
        <dbReference type="ChEBI" id="CHEBI:61387"/>
        <dbReference type="ChEBI" id="CHEBI:61388"/>
        <dbReference type="EC" id="2.4.1.227"/>
    </reaction>
</comment>
<comment type="pathway">
    <text evidence="1">Cell wall biogenesis; peptidoglycan biosynthesis.</text>
</comment>
<comment type="subcellular location">
    <subcellularLocation>
        <location evidence="1">Cell membrane</location>
        <topology evidence="1">Peripheral membrane protein</topology>
        <orientation evidence="1">Cytoplasmic side</orientation>
    </subcellularLocation>
</comment>
<comment type="similarity">
    <text evidence="1">Belongs to the glycosyltransferase 28 family. MurG subfamily.</text>
</comment>
<comment type="sequence caution" evidence="2">
    <conflict type="erroneous initiation">
        <sequence resource="EMBL-CDS" id="AAT56063"/>
    </conflict>
</comment>
<proteinExistence type="inferred from homology"/>
<keyword id="KW-0131">Cell cycle</keyword>
<keyword id="KW-0132">Cell division</keyword>
<keyword id="KW-1003">Cell membrane</keyword>
<keyword id="KW-0133">Cell shape</keyword>
<keyword id="KW-0961">Cell wall biogenesis/degradation</keyword>
<keyword id="KW-0328">Glycosyltransferase</keyword>
<keyword id="KW-0472">Membrane</keyword>
<keyword id="KW-0573">Peptidoglycan synthesis</keyword>
<keyword id="KW-1185">Reference proteome</keyword>
<keyword id="KW-0808">Transferase</keyword>
<gene>
    <name evidence="1" type="primary">murG1</name>
    <name type="synonym">murG-1</name>
    <name type="ordered locus">BA_4049</name>
    <name type="ordered locus">GBAA_4049</name>
    <name type="ordered locus">BAS3761</name>
</gene>
<name>MURG1_BACAN</name>
<sequence length="364" mass="39600">MRVLVSGGGTGGHIYPALALIREIKKLNPEARFLYIGTENGLESTIVPKAGIPFQSIVISGFKRKISLDNVKTVMRFLKGVQDSKRYIRRFNPDIVIGTGGYVCGPVVYAAAKLGIPTIVHEQNSVPGVTNKFLSRYVDKVAVCFEAAAEHFPQSKVVMTGNPRASEVMDQNGMKGKRSVGLSLPKKSVLIFGGSRGARPINDAFVEAIEQFGNKSYEILYVTGEVHYDKVMEAVKQKGNPNNVIIKPFIHNMPEVLTGVDLVVSRAGATTLAELTALGKPSVLIPSPYVTNNHQEKNARSVVDKGAAKMLLEKDLTAETLIRDIDEILLDAQTLQNMKLAAGQLGIPDAANKLYEVMNKLVKK</sequence>
<organism>
    <name type="scientific">Bacillus anthracis</name>
    <dbReference type="NCBI Taxonomy" id="1392"/>
    <lineage>
        <taxon>Bacteria</taxon>
        <taxon>Bacillati</taxon>
        <taxon>Bacillota</taxon>
        <taxon>Bacilli</taxon>
        <taxon>Bacillales</taxon>
        <taxon>Bacillaceae</taxon>
        <taxon>Bacillus</taxon>
        <taxon>Bacillus cereus group</taxon>
    </lineage>
</organism>
<evidence type="ECO:0000255" key="1">
    <source>
        <dbReference type="HAMAP-Rule" id="MF_00033"/>
    </source>
</evidence>
<evidence type="ECO:0000305" key="2"/>
<accession>Q81JG5</accession>
<accession>Q6HUH6</accession>
<accession>Q6KNR2</accession>
<feature type="chain" id="PRO_0000109138" description="UDP-N-acetylglucosamine--N-acetylmuramyl-(pentapeptide) pyrophosphoryl-undecaprenol N-acetylglucosamine transferase 1">
    <location>
        <begin position="1"/>
        <end position="364"/>
    </location>
</feature>
<feature type="binding site" evidence="1">
    <location>
        <begin position="10"/>
        <end position="12"/>
    </location>
    <ligand>
        <name>UDP-N-acetyl-alpha-D-glucosamine</name>
        <dbReference type="ChEBI" id="CHEBI:57705"/>
    </ligand>
</feature>
<feature type="binding site" evidence="1">
    <location>
        <position position="124"/>
    </location>
    <ligand>
        <name>UDP-N-acetyl-alpha-D-glucosamine</name>
        <dbReference type="ChEBI" id="CHEBI:57705"/>
    </ligand>
</feature>
<feature type="binding site" evidence="1">
    <location>
        <position position="195"/>
    </location>
    <ligand>
        <name>UDP-N-acetyl-alpha-D-glucosamine</name>
        <dbReference type="ChEBI" id="CHEBI:57705"/>
    </ligand>
</feature>
<feature type="binding site" evidence="1">
    <location>
        <position position="250"/>
    </location>
    <ligand>
        <name>UDP-N-acetyl-alpha-D-glucosamine</name>
        <dbReference type="ChEBI" id="CHEBI:57705"/>
    </ligand>
</feature>
<feature type="binding site" evidence="1">
    <location>
        <position position="295"/>
    </location>
    <ligand>
        <name>UDP-N-acetyl-alpha-D-glucosamine</name>
        <dbReference type="ChEBI" id="CHEBI:57705"/>
    </ligand>
</feature>
<protein>
    <recommendedName>
        <fullName evidence="1">UDP-N-acetylglucosamine--N-acetylmuramyl-(pentapeptide) pyrophosphoryl-undecaprenol N-acetylglucosamine transferase 1</fullName>
        <ecNumber evidence="1">2.4.1.227</ecNumber>
    </recommendedName>
    <alternativeName>
        <fullName evidence="1">Undecaprenyl-PP-MurNAc-pentapeptide-UDPGlcNAc GlcNAc transferase 1</fullName>
    </alternativeName>
</protein>